<protein>
    <recommendedName>
        <fullName>mRNA cap guanine-N(7) methyltransferase</fullName>
        <ecNumber evidence="1">2.1.1.56</ecNumber>
    </recommendedName>
    <alternativeName>
        <fullName>mRNA (guanine-N(7))-methyltransferase</fullName>
    </alternativeName>
    <alternativeName>
        <fullName>mRNA cap methyltransferase</fullName>
    </alternativeName>
</protein>
<gene>
    <name type="primary">ABD1</name>
    <name type="ordered locus">YBR236C</name>
    <name type="ORF">YBR1602</name>
</gene>
<dbReference type="EC" id="2.1.1.56" evidence="1"/>
<dbReference type="EMBL" id="L12000">
    <property type="protein sequence ID" value="AAA34383.1"/>
    <property type="molecule type" value="Genomic_DNA"/>
</dbReference>
<dbReference type="EMBL" id="Z36105">
    <property type="protein sequence ID" value="CAA85199.1"/>
    <property type="molecule type" value="Genomic_DNA"/>
</dbReference>
<dbReference type="EMBL" id="AY692770">
    <property type="protein sequence ID" value="AAT92789.1"/>
    <property type="molecule type" value="Genomic_DNA"/>
</dbReference>
<dbReference type="EMBL" id="BK006936">
    <property type="protein sequence ID" value="DAA07352.1"/>
    <property type="molecule type" value="Genomic_DNA"/>
</dbReference>
<dbReference type="PIR" id="S41782">
    <property type="entry name" value="S41782"/>
</dbReference>
<dbReference type="RefSeq" id="NP_009795.3">
    <property type="nucleotide sequence ID" value="NM_001178584.3"/>
</dbReference>
<dbReference type="SMR" id="P32783"/>
<dbReference type="BioGRID" id="32931">
    <property type="interactions" value="347"/>
</dbReference>
<dbReference type="DIP" id="DIP-2503N"/>
<dbReference type="FunCoup" id="P32783">
    <property type="interactions" value="1162"/>
</dbReference>
<dbReference type="IntAct" id="P32783">
    <property type="interactions" value="12"/>
</dbReference>
<dbReference type="MINT" id="P32783"/>
<dbReference type="STRING" id="4932.YBR236C"/>
<dbReference type="iPTMnet" id="P32783"/>
<dbReference type="PaxDb" id="4932-YBR236C"/>
<dbReference type="PeptideAtlas" id="P32783"/>
<dbReference type="EnsemblFungi" id="YBR236C_mRNA">
    <property type="protein sequence ID" value="YBR236C"/>
    <property type="gene ID" value="YBR236C"/>
</dbReference>
<dbReference type="GeneID" id="852538"/>
<dbReference type="KEGG" id="sce:YBR236C"/>
<dbReference type="AGR" id="SGD:S000000440"/>
<dbReference type="SGD" id="S000000440">
    <property type="gene designation" value="ABD1"/>
</dbReference>
<dbReference type="VEuPathDB" id="FungiDB:YBR236C"/>
<dbReference type="eggNOG" id="KOG1975">
    <property type="taxonomic scope" value="Eukaryota"/>
</dbReference>
<dbReference type="GeneTree" id="ENSGT00390000002368"/>
<dbReference type="HOGENOM" id="CLU_020346_2_0_1"/>
<dbReference type="InParanoid" id="P32783"/>
<dbReference type="OMA" id="LITGDCF"/>
<dbReference type="OrthoDB" id="10248867at2759"/>
<dbReference type="BioCyc" id="MetaCyc:G3O-29167-MONOMER"/>
<dbReference type="BioCyc" id="YEAST:G3O-29167-MONOMER"/>
<dbReference type="BRENDA" id="2.1.1.56">
    <property type="organism ID" value="984"/>
</dbReference>
<dbReference type="Reactome" id="R-SCE-72086">
    <property type="pathway name" value="mRNA Capping"/>
</dbReference>
<dbReference type="Reactome" id="R-SCE-77075">
    <property type="pathway name" value="RNA Pol II CTD phosphorylation and interaction with CE"/>
</dbReference>
<dbReference type="BioGRID-ORCS" id="852538">
    <property type="hits" value="2 hits in 10 CRISPR screens"/>
</dbReference>
<dbReference type="PRO" id="PR:P32783"/>
<dbReference type="Proteomes" id="UP000002311">
    <property type="component" value="Chromosome II"/>
</dbReference>
<dbReference type="RNAct" id="P32783">
    <property type="molecule type" value="protein"/>
</dbReference>
<dbReference type="GO" id="GO:0005829">
    <property type="term" value="C:cytosol"/>
    <property type="evidence" value="ECO:0000314"/>
    <property type="project" value="SGD"/>
</dbReference>
<dbReference type="GO" id="GO:0005634">
    <property type="term" value="C:nucleus"/>
    <property type="evidence" value="ECO:0000314"/>
    <property type="project" value="SGD"/>
</dbReference>
<dbReference type="GO" id="GO:0004482">
    <property type="term" value="F:mRNA 5'-cap (guanine-N7-)-methyltransferase activity"/>
    <property type="evidence" value="ECO:0000314"/>
    <property type="project" value="SGD"/>
</dbReference>
<dbReference type="GO" id="GO:0003723">
    <property type="term" value="F:RNA binding"/>
    <property type="evidence" value="ECO:0007669"/>
    <property type="project" value="UniProtKB-KW"/>
</dbReference>
<dbReference type="GO" id="GO:0006370">
    <property type="term" value="P:7-methylguanosine mRNA capping"/>
    <property type="evidence" value="ECO:0000314"/>
    <property type="project" value="SGD"/>
</dbReference>
<dbReference type="CDD" id="cd02440">
    <property type="entry name" value="AdoMet_MTases"/>
    <property type="match status" value="1"/>
</dbReference>
<dbReference type="FunFam" id="3.40.50.150:FF:000280">
    <property type="entry name" value="mRNA cap guanine-N7 methyltransferase"/>
    <property type="match status" value="1"/>
</dbReference>
<dbReference type="Gene3D" id="3.40.50.150">
    <property type="entry name" value="Vaccinia Virus protein VP39"/>
    <property type="match status" value="1"/>
</dbReference>
<dbReference type="InterPro" id="IPR004971">
    <property type="entry name" value="mRNA_G-N7_MeTrfase_dom"/>
</dbReference>
<dbReference type="InterPro" id="IPR016899">
    <property type="entry name" value="mRNA_G-N7_MeTrfase_euk"/>
</dbReference>
<dbReference type="InterPro" id="IPR039753">
    <property type="entry name" value="RG7MT1"/>
</dbReference>
<dbReference type="InterPro" id="IPR029063">
    <property type="entry name" value="SAM-dependent_MTases_sf"/>
</dbReference>
<dbReference type="PANTHER" id="PTHR12189:SF2">
    <property type="entry name" value="MRNA CAP GUANINE-N7 METHYLTRANSFERASE"/>
    <property type="match status" value="1"/>
</dbReference>
<dbReference type="PANTHER" id="PTHR12189">
    <property type="entry name" value="MRNA GUANINE-7- METHYLTRANSFERASE"/>
    <property type="match status" value="1"/>
</dbReference>
<dbReference type="Pfam" id="PF03291">
    <property type="entry name" value="mRNA_G-N7_MeTrfase"/>
    <property type="match status" value="1"/>
</dbReference>
<dbReference type="PIRSF" id="PIRSF028762">
    <property type="entry name" value="ABD1"/>
    <property type="match status" value="1"/>
</dbReference>
<dbReference type="SUPFAM" id="SSF53335">
    <property type="entry name" value="S-adenosyl-L-methionine-dependent methyltransferases"/>
    <property type="match status" value="1"/>
</dbReference>
<dbReference type="PROSITE" id="PS51562">
    <property type="entry name" value="RNA_CAP0_MT"/>
    <property type="match status" value="1"/>
</dbReference>
<evidence type="ECO:0000250" key="1">
    <source>
        <dbReference type="UniProtKB" id="O43148"/>
    </source>
</evidence>
<evidence type="ECO:0000255" key="2">
    <source>
        <dbReference type="PROSITE-ProRule" id="PRU00895"/>
    </source>
</evidence>
<evidence type="ECO:0000256" key="3">
    <source>
        <dbReference type="SAM" id="MobiDB-lite"/>
    </source>
</evidence>
<evidence type="ECO:0000269" key="4">
    <source>
    </source>
</evidence>
<evidence type="ECO:0000269" key="5">
    <source>
    </source>
</evidence>
<evidence type="ECO:0000269" key="6">
    <source>
    </source>
</evidence>
<evidence type="ECO:0000269" key="7">
    <source>
    </source>
</evidence>
<evidence type="ECO:0000269" key="8">
    <source>
    </source>
</evidence>
<evidence type="ECO:0000305" key="9"/>
<proteinExistence type="evidence at protein level"/>
<keyword id="KW-0489">Methyltransferase</keyword>
<keyword id="KW-0506">mRNA capping</keyword>
<keyword id="KW-0507">mRNA processing</keyword>
<keyword id="KW-0539">Nucleus</keyword>
<keyword id="KW-1185">Reference proteome</keyword>
<keyword id="KW-0694">RNA-binding</keyword>
<keyword id="KW-0949">S-adenosyl-L-methionine</keyword>
<keyword id="KW-0808">Transferase</keyword>
<reference key="1">
    <citation type="submission" date="1993-05" db="EMBL/GenBank/DDBJ databases">
        <title>Molecular analysis of the ABD1 gene of Saccharomyces cerevisiae, a gene that displays mutational synergism with the bud formation gene BEM1.</title>
        <authorList>
            <person name="Corrado K."/>
            <person name="Pringle J.R."/>
        </authorList>
    </citation>
    <scope>NUCLEOTIDE SEQUENCE [GENOMIC DNA]</scope>
</reference>
<reference key="2">
    <citation type="journal article" date="1994" name="EMBO J.">
        <title>Complete DNA sequence of yeast chromosome II.</title>
        <authorList>
            <person name="Feldmann H."/>
            <person name="Aigle M."/>
            <person name="Aljinovic G."/>
            <person name="Andre B."/>
            <person name="Baclet M.C."/>
            <person name="Barthe C."/>
            <person name="Baur A."/>
            <person name="Becam A.-M."/>
            <person name="Biteau N."/>
            <person name="Boles E."/>
            <person name="Brandt T."/>
            <person name="Brendel M."/>
            <person name="Brueckner M."/>
            <person name="Bussereau F."/>
            <person name="Christiansen C."/>
            <person name="Contreras R."/>
            <person name="Crouzet M."/>
            <person name="Cziepluch C."/>
            <person name="Demolis N."/>
            <person name="Delaveau T."/>
            <person name="Doignon F."/>
            <person name="Domdey H."/>
            <person name="Duesterhus S."/>
            <person name="Dubois E."/>
            <person name="Dujon B."/>
            <person name="El Bakkoury M."/>
            <person name="Entian K.-D."/>
            <person name="Feuermann M."/>
            <person name="Fiers W."/>
            <person name="Fobo G.M."/>
            <person name="Fritz C."/>
            <person name="Gassenhuber J."/>
            <person name="Glansdorff N."/>
            <person name="Goffeau A."/>
            <person name="Grivell L.A."/>
            <person name="de Haan M."/>
            <person name="Hein C."/>
            <person name="Herbert C.J."/>
            <person name="Hollenberg C.P."/>
            <person name="Holmstroem K."/>
            <person name="Jacq C."/>
            <person name="Jacquet M."/>
            <person name="Jauniaux J.-C."/>
            <person name="Jonniaux J.-L."/>
            <person name="Kallesoee T."/>
            <person name="Kiesau P."/>
            <person name="Kirchrath L."/>
            <person name="Koetter P."/>
            <person name="Korol S."/>
            <person name="Liebl S."/>
            <person name="Logghe M."/>
            <person name="Lohan A.J.E."/>
            <person name="Louis E.J."/>
            <person name="Li Z.Y."/>
            <person name="Maat M.J."/>
            <person name="Mallet L."/>
            <person name="Mannhaupt G."/>
            <person name="Messenguy F."/>
            <person name="Miosga T."/>
            <person name="Molemans F."/>
            <person name="Mueller S."/>
            <person name="Nasr F."/>
            <person name="Obermaier B."/>
            <person name="Perea J."/>
            <person name="Pierard A."/>
            <person name="Piravandi E."/>
            <person name="Pohl F.M."/>
            <person name="Pohl T.M."/>
            <person name="Potier S."/>
            <person name="Proft M."/>
            <person name="Purnelle B."/>
            <person name="Ramezani Rad M."/>
            <person name="Rieger M."/>
            <person name="Rose M."/>
            <person name="Schaaff-Gerstenschlaeger I."/>
            <person name="Scherens B."/>
            <person name="Schwarzlose C."/>
            <person name="Skala J."/>
            <person name="Slonimski P.P."/>
            <person name="Smits P.H.M."/>
            <person name="Souciet J.-L."/>
            <person name="Steensma H.Y."/>
            <person name="Stucka R."/>
            <person name="Urrestarazu L.A."/>
            <person name="van der Aart Q.J.M."/>
            <person name="Van Dyck L."/>
            <person name="Vassarotti A."/>
            <person name="Vetter I."/>
            <person name="Vierendeels F."/>
            <person name="Vissers S."/>
            <person name="Wagner G."/>
            <person name="de Wergifosse P."/>
            <person name="Wolfe K.H."/>
            <person name="Zagulski M."/>
            <person name="Zimmermann F.K."/>
            <person name="Mewes H.-W."/>
            <person name="Kleine K."/>
        </authorList>
    </citation>
    <scope>NUCLEOTIDE SEQUENCE [LARGE SCALE GENOMIC DNA]</scope>
    <source>
        <strain>ATCC 204508 / S288c</strain>
    </source>
</reference>
<reference key="3">
    <citation type="journal article" date="2014" name="G3 (Bethesda)">
        <title>The reference genome sequence of Saccharomyces cerevisiae: Then and now.</title>
        <authorList>
            <person name="Engel S.R."/>
            <person name="Dietrich F.S."/>
            <person name="Fisk D.G."/>
            <person name="Binkley G."/>
            <person name="Balakrishnan R."/>
            <person name="Costanzo M.C."/>
            <person name="Dwight S.S."/>
            <person name="Hitz B.C."/>
            <person name="Karra K."/>
            <person name="Nash R.S."/>
            <person name="Weng S."/>
            <person name="Wong E.D."/>
            <person name="Lloyd P."/>
            <person name="Skrzypek M.S."/>
            <person name="Miyasato S.R."/>
            <person name="Simison M."/>
            <person name="Cherry J.M."/>
        </authorList>
    </citation>
    <scope>GENOME REANNOTATION</scope>
    <source>
        <strain>ATCC 204508 / S288c</strain>
    </source>
</reference>
<reference key="4">
    <citation type="journal article" date="2007" name="Genome Res.">
        <title>Approaching a complete repository of sequence-verified protein-encoding clones for Saccharomyces cerevisiae.</title>
        <authorList>
            <person name="Hu Y."/>
            <person name="Rolfs A."/>
            <person name="Bhullar B."/>
            <person name="Murthy T.V.S."/>
            <person name="Zhu C."/>
            <person name="Berger M.F."/>
            <person name="Camargo A.A."/>
            <person name="Kelley F."/>
            <person name="McCarron S."/>
            <person name="Jepson D."/>
            <person name="Richardson A."/>
            <person name="Raphael J."/>
            <person name="Moreira D."/>
            <person name="Taycher E."/>
            <person name="Zuo D."/>
            <person name="Mohr S."/>
            <person name="Kane M.F."/>
            <person name="Williamson J."/>
            <person name="Simpson A.J.G."/>
            <person name="Bulyk M.L."/>
            <person name="Harlow E."/>
            <person name="Marsischky G."/>
            <person name="Kolodner R.D."/>
            <person name="LaBaer J."/>
        </authorList>
    </citation>
    <scope>NUCLEOTIDE SEQUENCE [GENOMIC DNA]</scope>
    <source>
        <strain>ATCC 204508 / S288c</strain>
    </source>
</reference>
<reference key="5">
    <citation type="journal article" date="1995" name="Mol. Cell. Biol.">
        <title>Yeast mRNA cap methyltransferase is a 50-kilodalton protein encoded by an essential gene.</title>
        <authorList>
            <person name="Mao X."/>
            <person name="Schwer B."/>
            <person name="Shuman S."/>
        </authorList>
    </citation>
    <scope>FUNCTION</scope>
</reference>
<reference key="6">
    <citation type="journal article" date="1996" name="Mol. Cell. Biol.">
        <title>Mutational analysis of the Saccharomyces cerevisiae ABD1 gene: cap methyltransferase activity is essential for cell growth.</title>
        <authorList>
            <person name="Mao X."/>
            <person name="Schwer B."/>
            <person name="Shuman S."/>
        </authorList>
    </citation>
    <scope>MUTAGENESIS OF GLY-174; ASP-178; HIS-253; TYR-254; THR-282; GLU-287; GLU-361 AND TYR-362</scope>
</reference>
<reference key="7">
    <citation type="journal article" date="1997" name="J. Biol. Chem.">
        <title>Structure-function analysis of the mRNA cap methyltransferase of Saccharomyces cerevisiae.</title>
        <authorList>
            <person name="Wang S.P."/>
            <person name="Shuman S."/>
        </authorList>
    </citation>
    <scope>MUTAGENESIS OF VAL-168; GLU-170; GLY-172; GLY-176; LYS-181; TYR-182; ASP-194; ARG-206; TYR-254; GLY-276; GLY-277; GLU-347; TYR-348; VAL-349; VAL-350; GLY-363; LEU-366; VAL-367 AND PHE-372</scope>
</reference>
<reference key="8">
    <citation type="journal article" date="2000" name="Genes Dev.">
        <title>Dynamic association of capping enzymes with transcribing RNA polymerase II.</title>
        <authorList>
            <person name="Schroeder S.C."/>
            <person name="Schwer B."/>
            <person name="Shuman S."/>
            <person name="Bentley D."/>
        </authorList>
    </citation>
    <scope>SUBCELLULAR LOCATION</scope>
</reference>
<reference key="9">
    <citation type="journal article" date="2001" name="BMC Bioinformatics">
        <title>mRNA:guanine-N7 cap methyltransferases: identification of novel members of the family, evolutionary analysis, homology modeling, and analysis of sequence-structure-function relationships.</title>
        <authorList>
            <person name="Bujnicki J.M."/>
            <person name="Feder M."/>
            <person name="Radlinska M."/>
            <person name="Rychlewski L."/>
        </authorList>
    </citation>
    <scope>3D-STRUCTURE MODELING OF 140-424</scope>
    <scope>MUTAGENESIS OF GLU-170; ASP-194 AND ARG-206</scope>
</reference>
<sequence>MSTKPEKPIWMSQEDYDRQYGSITGDESSTVSKKDSKVTANAPGDGNGSLPVLQSSSILTSKVSDLPIEAESGFKIQKRRHERYDQEERLRKQRAQKLREEQLKRHEIEMTANRSINVDQIVREHYNERTIIANRAKRNLSPIIKLRNFNNAIKYMLIDKYTKPGDVVLELGCGKGGDLRKYGAAGISQFIGIDISNASIQEAHKRYRSMRNLDYQVVLITGDCFGESLGVAVEPFPDCRFPCDIVSTQFCLHYAFETEEKARRALLNVAKSLKIGGHFFGTIPDSEFIRYKLNKFPKEVEKPSWGNSIYKVTFENNSYQKNDYEFTSPYGQMYTYWLEDAIDNVPEYVVPFETLRSLADEYGLELVSQMPFNKFFVQEIPKWIERFSPKMREGLQRSDGRYGVEGDEKEAASYFYTMFAFRKVKQYIEPESVKPN</sequence>
<name>MCES_YEAST</name>
<feature type="chain" id="PRO_0000210134" description="mRNA cap guanine-N(7) methyltransferase">
    <location>
        <begin position="1"/>
        <end position="436"/>
    </location>
</feature>
<feature type="domain" description="mRNA cap 0 methyltransferase" evidence="2">
    <location>
        <begin position="141"/>
        <end position="424"/>
    </location>
</feature>
<feature type="region of interest" description="Disordered" evidence="3">
    <location>
        <begin position="1"/>
        <end position="50"/>
    </location>
</feature>
<feature type="binding site" evidence="2">
    <location>
        <begin position="150"/>
        <end position="151"/>
    </location>
    <ligand>
        <name>mRNA</name>
        <dbReference type="ChEBI" id="CHEBI:33699"/>
    </ligand>
    <ligandPart>
        <name>mRNA cap</name>
    </ligandPart>
</feature>
<feature type="binding site" evidence="2">
    <location>
        <position position="154"/>
    </location>
    <ligand>
        <name>S-adenosyl-L-methionine</name>
        <dbReference type="ChEBI" id="CHEBI:59789"/>
    </ligand>
</feature>
<feature type="binding site" evidence="2">
    <location>
        <position position="172"/>
    </location>
    <ligand>
        <name>S-adenosyl-L-methionine</name>
        <dbReference type="ChEBI" id="CHEBI:59789"/>
    </ligand>
</feature>
<feature type="binding site" evidence="2">
    <location>
        <position position="194"/>
    </location>
    <ligand>
        <name>S-adenosyl-L-methionine</name>
        <dbReference type="ChEBI" id="CHEBI:59789"/>
    </ligand>
</feature>
<feature type="binding site" evidence="1">
    <location>
        <position position="223"/>
    </location>
    <ligand>
        <name>S-adenosyl-L-methionine</name>
        <dbReference type="ChEBI" id="CHEBI:59789"/>
    </ligand>
</feature>
<feature type="binding site" evidence="1">
    <location>
        <position position="249"/>
    </location>
    <ligand>
        <name>S-adenosyl-L-methionine</name>
        <dbReference type="ChEBI" id="CHEBI:59789"/>
    </ligand>
</feature>
<feature type="binding site" evidence="1">
    <location>
        <position position="254"/>
    </location>
    <ligand>
        <name>S-adenosyl-L-methionine</name>
        <dbReference type="ChEBI" id="CHEBI:59789"/>
    </ligand>
</feature>
<feature type="site" description="mRNA cap binding" evidence="2">
    <location>
        <position position="175"/>
    </location>
</feature>
<feature type="site" description="mRNA cap binding" evidence="2">
    <location>
        <position position="181"/>
    </location>
</feature>
<feature type="site" description="mRNA cap binding" evidence="2">
    <location>
        <position position="206"/>
    </location>
</feature>
<feature type="site" description="mRNA cap binding" evidence="2">
    <location>
        <position position="253"/>
    </location>
</feature>
<feature type="site" description="mRNA cap binding" evidence="2">
    <location>
        <position position="347"/>
    </location>
</feature>
<feature type="site" description="mRNA cap binding" evidence="2">
    <location>
        <position position="416"/>
    </location>
</feature>
<feature type="mutagenesis site" description="Still viable; normal growth." evidence="8">
    <original>V</original>
    <variation>A</variation>
    <location>
        <position position="168"/>
    </location>
</feature>
<feature type="mutagenesis site" description="Non-viable; reduced enzyme activity to 8% of wild-type." evidence="5 8">
    <original>E</original>
    <variation>A</variation>
    <location>
        <position position="170"/>
    </location>
</feature>
<feature type="mutagenesis site" description="Still viable; increase in activity." evidence="5 8">
    <original>E</original>
    <variation>D</variation>
    <location>
        <position position="170"/>
    </location>
</feature>
<feature type="mutagenesis site" description="Non-viable; reduced enzyme activity to 8% of wild-type." evidence="5 8">
    <original>E</original>
    <variation>Q</variation>
    <location>
        <position position="170"/>
    </location>
</feature>
<feature type="mutagenesis site" description="Still viable; normal growth." evidence="8">
    <original>G</original>
    <variation>A</variation>
    <location>
        <position position="172"/>
    </location>
</feature>
<feature type="mutagenesis site" description="Non viable; no growth." evidence="7">
    <original>G</original>
    <variation>A</variation>
    <location>
        <position position="174"/>
    </location>
</feature>
<feature type="mutagenesis site" description="Still viable; normal growth." evidence="8">
    <original>G</original>
    <variation>A</variation>
    <location>
        <position position="176"/>
    </location>
</feature>
<feature type="mutagenesis site" description="Microcolony formation." evidence="7">
    <original>D</original>
    <variation>A</variation>
    <location>
        <position position="178"/>
    </location>
</feature>
<feature type="mutagenesis site" description="Still viable; normal growth." evidence="8">
    <original>K</original>
    <variation>A</variation>
    <location>
        <position position="181"/>
    </location>
</feature>
<feature type="mutagenesis site" description="Still viable; normal growth." evidence="8">
    <original>Y</original>
    <variation>A</variation>
    <location>
        <position position="182"/>
    </location>
</feature>
<feature type="mutagenesis site" description="Lethal; no enzyme activity." evidence="5 8">
    <original>D</original>
    <variation>A</variation>
    <location>
        <position position="194"/>
    </location>
</feature>
<feature type="mutagenesis site" description="Still viable; activity near to wild-type." evidence="5 8">
    <original>D</original>
    <variation>E</variation>
    <location>
        <position position="194"/>
    </location>
</feature>
<feature type="mutagenesis site" description="Lethal; no enzyme activity." evidence="5 8">
    <original>D</original>
    <variation>N</variation>
    <location>
        <position position="194"/>
    </location>
</feature>
<feature type="mutagenesis site" description="Lethal." evidence="5 8">
    <original>R</original>
    <variation>A</variation>
    <location>
        <position position="206"/>
    </location>
</feature>
<feature type="mutagenesis site" description="Still viable; little change in enzyme activity." evidence="5 8">
    <original>R</original>
    <variation>K</variation>
    <location>
        <position position="206"/>
    </location>
</feature>
<feature type="mutagenesis site" description="Still viable; normal growth." evidence="7">
    <original>H</original>
    <variation>A</variation>
    <location>
        <position position="253"/>
    </location>
</feature>
<feature type="mutagenesis site" description="Non viable; no growth." evidence="7 8">
    <original>Y</original>
    <variation>A</variation>
    <location>
        <position position="254"/>
    </location>
</feature>
<feature type="mutagenesis site" description="Still viable; slow growth; near to wild-type enzyme activity." evidence="7 8">
    <original>Y</original>
    <variation>F</variation>
    <location>
        <position position="254"/>
    </location>
</feature>
<feature type="mutagenesis site" description="Lethal; Enzyme activity 10% of wild-type." evidence="7 8">
    <original>Y</original>
    <variation>S</variation>
    <location>
        <position position="254"/>
    </location>
</feature>
<feature type="mutagenesis site" description="Still viable; normal growth." evidence="8">
    <original>G</original>
    <variation>A</variation>
    <location>
        <position position="276"/>
    </location>
</feature>
<feature type="mutagenesis site" description="Still viable; normal growth." evidence="8">
    <original>G</original>
    <variation>A</variation>
    <location>
        <position position="277"/>
    </location>
</feature>
<feature type="mutagenesis site" description="Still viable; normal growth." evidence="7">
    <original>T</original>
    <variation>A</variation>
    <location>
        <position position="282"/>
    </location>
</feature>
<feature type="mutagenesis site" description="Still viable; normal growth." evidence="7">
    <original>E</original>
    <variation>A</variation>
    <location>
        <position position="287"/>
    </location>
</feature>
<feature type="mutagenesis site" description="Still viable; normal growth." evidence="8">
    <original>E</original>
    <variation>A</variation>
    <location>
        <position position="347"/>
    </location>
</feature>
<feature type="mutagenesis site" description="Still viable; normal growth." evidence="8">
    <original>Y</original>
    <variation>A</variation>
    <location>
        <position position="348"/>
    </location>
</feature>
<feature type="mutagenesis site" description="Still viable; normal growth." evidence="8">
    <original>V</original>
    <variation>A</variation>
    <location>
        <position position="349"/>
    </location>
</feature>
<feature type="mutagenesis site" description="Still viable; normal growth." evidence="8">
    <original>V</original>
    <variation>A</variation>
    <location>
        <position position="350"/>
    </location>
</feature>
<feature type="mutagenesis site" description="Still viable; normal growth." evidence="7">
    <original>E</original>
    <variation>A</variation>
    <location>
        <position position="361"/>
    </location>
</feature>
<feature type="mutagenesis site" description="Still viable; normal growth." evidence="7">
    <original>Y</original>
    <variation>A</variation>
    <location>
        <position position="362"/>
    </location>
</feature>
<feature type="mutagenesis site" description="Still viable; normal growth." evidence="8">
    <original>G</original>
    <variation>A</variation>
    <location>
        <position position="363"/>
    </location>
</feature>
<feature type="mutagenesis site" description="Still viable; normal growth." evidence="8">
    <original>L</original>
    <variation>A</variation>
    <location>
        <position position="366"/>
    </location>
</feature>
<feature type="mutagenesis site" description="Still viable; normal growth." evidence="8">
    <original>V</original>
    <variation>A</variation>
    <location>
        <position position="367"/>
    </location>
</feature>
<feature type="mutagenesis site" description="Still viable; normal growth." evidence="8">
    <original>F</original>
    <variation>A</variation>
    <location>
        <position position="372"/>
    </location>
</feature>
<feature type="sequence conflict" description="In Ref. 4; AAT92789." evidence="9" ref="4">
    <original>Y</original>
    <variation>C</variation>
    <location>
        <position position="126"/>
    </location>
</feature>
<organism>
    <name type="scientific">Saccharomyces cerevisiae (strain ATCC 204508 / S288c)</name>
    <name type="common">Baker's yeast</name>
    <dbReference type="NCBI Taxonomy" id="559292"/>
    <lineage>
        <taxon>Eukaryota</taxon>
        <taxon>Fungi</taxon>
        <taxon>Dikarya</taxon>
        <taxon>Ascomycota</taxon>
        <taxon>Saccharomycotina</taxon>
        <taxon>Saccharomycetes</taxon>
        <taxon>Saccharomycetales</taxon>
        <taxon>Saccharomycetaceae</taxon>
        <taxon>Saccharomyces</taxon>
    </lineage>
</organism>
<accession>P32783</accession>
<accession>D6VQN2</accession>
<accession>Q6B2G0</accession>
<comment type="function">
    <text evidence="6">Responsible for methylating the 5'-cap structure of mRNAs.</text>
</comment>
<comment type="catalytic activity">
    <reaction evidence="1 2">
        <text>a 5'-end (5'-triphosphoguanosine)-ribonucleoside in mRNA + S-adenosyl-L-methionine = a 5'-end (N(7)-methyl 5'-triphosphoguanosine)-ribonucleoside in mRNA + S-adenosyl-L-homocysteine</text>
        <dbReference type="Rhea" id="RHEA:67008"/>
        <dbReference type="Rhea" id="RHEA-COMP:17166"/>
        <dbReference type="Rhea" id="RHEA-COMP:17167"/>
        <dbReference type="ChEBI" id="CHEBI:57856"/>
        <dbReference type="ChEBI" id="CHEBI:59789"/>
        <dbReference type="ChEBI" id="CHEBI:156461"/>
        <dbReference type="ChEBI" id="CHEBI:167617"/>
        <dbReference type="EC" id="2.1.1.56"/>
    </reaction>
</comment>
<comment type="subcellular location">
    <subcellularLocation>
        <location evidence="4">Nucleus</location>
    </subcellularLocation>
</comment>
<comment type="similarity">
    <text evidence="2">Belongs to the class I-like SAM-binding methyltransferase superfamily. mRNA cap 0 methyltransferase family.</text>
</comment>